<evidence type="ECO:0000250" key="1"/>
<evidence type="ECO:0000255" key="2">
    <source>
        <dbReference type="HAMAP-Rule" id="MF_00100"/>
    </source>
</evidence>
<evidence type="ECO:0000256" key="3">
    <source>
        <dbReference type="SAM" id="MobiDB-lite"/>
    </source>
</evidence>
<organism>
    <name type="scientific">Psychrobacter arcticus (strain DSM 17307 / VKM B-2377 / 273-4)</name>
    <dbReference type="NCBI Taxonomy" id="259536"/>
    <lineage>
        <taxon>Bacteria</taxon>
        <taxon>Pseudomonadati</taxon>
        <taxon>Pseudomonadota</taxon>
        <taxon>Gammaproteobacteria</taxon>
        <taxon>Moraxellales</taxon>
        <taxon>Moraxellaceae</taxon>
        <taxon>Psychrobacter</taxon>
    </lineage>
</organism>
<feature type="chain" id="PRO_0000228233" description="Translation initiation factor IF-2">
    <location>
        <begin position="1"/>
        <end position="908"/>
    </location>
</feature>
<feature type="domain" description="tr-type G">
    <location>
        <begin position="409"/>
        <end position="578"/>
    </location>
</feature>
<feature type="region of interest" description="Disordered" evidence="3">
    <location>
        <begin position="52"/>
        <end position="229"/>
    </location>
</feature>
<feature type="region of interest" description="Disordered" evidence="3">
    <location>
        <begin position="241"/>
        <end position="316"/>
    </location>
</feature>
<feature type="region of interest" description="G1" evidence="1">
    <location>
        <begin position="418"/>
        <end position="425"/>
    </location>
</feature>
<feature type="region of interest" description="G2" evidence="1">
    <location>
        <begin position="443"/>
        <end position="447"/>
    </location>
</feature>
<feature type="region of interest" description="G3" evidence="1">
    <location>
        <begin position="464"/>
        <end position="467"/>
    </location>
</feature>
<feature type="region of interest" description="G4" evidence="1">
    <location>
        <begin position="518"/>
        <end position="521"/>
    </location>
</feature>
<feature type="region of interest" description="G5" evidence="1">
    <location>
        <begin position="554"/>
        <end position="556"/>
    </location>
</feature>
<feature type="compositionally biased region" description="Polar residues" evidence="3">
    <location>
        <begin position="65"/>
        <end position="84"/>
    </location>
</feature>
<feature type="compositionally biased region" description="Basic and acidic residues" evidence="3">
    <location>
        <begin position="94"/>
        <end position="108"/>
    </location>
</feature>
<feature type="compositionally biased region" description="Basic and acidic residues" evidence="3">
    <location>
        <begin position="120"/>
        <end position="138"/>
    </location>
</feature>
<feature type="compositionally biased region" description="Basic and acidic residues" evidence="3">
    <location>
        <begin position="176"/>
        <end position="185"/>
    </location>
</feature>
<feature type="compositionally biased region" description="Basic and acidic residues" evidence="3">
    <location>
        <begin position="193"/>
        <end position="229"/>
    </location>
</feature>
<feature type="compositionally biased region" description="Basic and acidic residues" evidence="3">
    <location>
        <begin position="270"/>
        <end position="280"/>
    </location>
</feature>
<feature type="compositionally biased region" description="Basic and acidic residues" evidence="3">
    <location>
        <begin position="294"/>
        <end position="303"/>
    </location>
</feature>
<feature type="binding site" evidence="2">
    <location>
        <begin position="418"/>
        <end position="425"/>
    </location>
    <ligand>
        <name>GTP</name>
        <dbReference type="ChEBI" id="CHEBI:37565"/>
    </ligand>
</feature>
<feature type="binding site" evidence="2">
    <location>
        <begin position="464"/>
        <end position="468"/>
    </location>
    <ligand>
        <name>GTP</name>
        <dbReference type="ChEBI" id="CHEBI:37565"/>
    </ligand>
</feature>
<feature type="binding site" evidence="2">
    <location>
        <begin position="518"/>
        <end position="521"/>
    </location>
    <ligand>
        <name>GTP</name>
        <dbReference type="ChEBI" id="CHEBI:37565"/>
    </ligand>
</feature>
<name>IF2_PSYA2</name>
<comment type="function">
    <text evidence="2">One of the essential components for the initiation of protein synthesis. Protects formylmethionyl-tRNA from spontaneous hydrolysis and promotes its binding to the 30S ribosomal subunits. Also involved in the hydrolysis of GTP during the formation of the 70S ribosomal complex.</text>
</comment>
<comment type="subcellular location">
    <subcellularLocation>
        <location evidence="2">Cytoplasm</location>
    </subcellularLocation>
</comment>
<comment type="similarity">
    <text evidence="2">Belongs to the TRAFAC class translation factor GTPase superfamily. Classic translation factor GTPase family. IF-2 subfamily.</text>
</comment>
<protein>
    <recommendedName>
        <fullName evidence="2">Translation initiation factor IF-2</fullName>
    </recommendedName>
</protein>
<dbReference type="EMBL" id="CP000082">
    <property type="protein sequence ID" value="AAZ17943.1"/>
    <property type="molecule type" value="Genomic_DNA"/>
</dbReference>
<dbReference type="RefSeq" id="WP_011279382.1">
    <property type="nucleotide sequence ID" value="NC_007204.1"/>
</dbReference>
<dbReference type="SMR" id="Q4FVL5"/>
<dbReference type="STRING" id="259536.Psyc_0069"/>
<dbReference type="KEGG" id="par:Psyc_0069"/>
<dbReference type="eggNOG" id="COG0532">
    <property type="taxonomic scope" value="Bacteria"/>
</dbReference>
<dbReference type="HOGENOM" id="CLU_006301_6_3_6"/>
<dbReference type="OrthoDB" id="9811804at2"/>
<dbReference type="Proteomes" id="UP000000546">
    <property type="component" value="Chromosome"/>
</dbReference>
<dbReference type="GO" id="GO:0005829">
    <property type="term" value="C:cytosol"/>
    <property type="evidence" value="ECO:0007669"/>
    <property type="project" value="TreeGrafter"/>
</dbReference>
<dbReference type="GO" id="GO:0005525">
    <property type="term" value="F:GTP binding"/>
    <property type="evidence" value="ECO:0007669"/>
    <property type="project" value="UniProtKB-KW"/>
</dbReference>
<dbReference type="GO" id="GO:0003924">
    <property type="term" value="F:GTPase activity"/>
    <property type="evidence" value="ECO:0007669"/>
    <property type="project" value="UniProtKB-UniRule"/>
</dbReference>
<dbReference type="GO" id="GO:0003743">
    <property type="term" value="F:translation initiation factor activity"/>
    <property type="evidence" value="ECO:0007669"/>
    <property type="project" value="UniProtKB-UniRule"/>
</dbReference>
<dbReference type="CDD" id="cd01887">
    <property type="entry name" value="IF2_eIF5B"/>
    <property type="match status" value="1"/>
</dbReference>
<dbReference type="CDD" id="cd03702">
    <property type="entry name" value="IF2_mtIF2_II"/>
    <property type="match status" value="1"/>
</dbReference>
<dbReference type="CDD" id="cd03692">
    <property type="entry name" value="mtIF2_IVc"/>
    <property type="match status" value="1"/>
</dbReference>
<dbReference type="FunFam" id="2.40.30.10:FF:000007">
    <property type="entry name" value="Translation initiation factor IF-2"/>
    <property type="match status" value="1"/>
</dbReference>
<dbReference type="FunFam" id="2.40.30.10:FF:000008">
    <property type="entry name" value="Translation initiation factor IF-2"/>
    <property type="match status" value="1"/>
</dbReference>
<dbReference type="FunFam" id="3.40.50.10050:FF:000001">
    <property type="entry name" value="Translation initiation factor IF-2"/>
    <property type="match status" value="1"/>
</dbReference>
<dbReference type="FunFam" id="3.40.50.300:FF:000019">
    <property type="entry name" value="Translation initiation factor IF-2"/>
    <property type="match status" value="1"/>
</dbReference>
<dbReference type="Gene3D" id="3.40.50.300">
    <property type="entry name" value="P-loop containing nucleotide triphosphate hydrolases"/>
    <property type="match status" value="1"/>
</dbReference>
<dbReference type="Gene3D" id="3.30.56.50">
    <property type="entry name" value="Putative DNA-binding domain, N-terminal subdomain of bacterial translation initiation factor IF2"/>
    <property type="match status" value="1"/>
</dbReference>
<dbReference type="Gene3D" id="2.40.30.10">
    <property type="entry name" value="Translation factors"/>
    <property type="match status" value="2"/>
</dbReference>
<dbReference type="Gene3D" id="3.40.50.10050">
    <property type="entry name" value="Translation initiation factor IF- 2, domain 3"/>
    <property type="match status" value="1"/>
</dbReference>
<dbReference type="HAMAP" id="MF_00100_B">
    <property type="entry name" value="IF_2_B"/>
    <property type="match status" value="1"/>
</dbReference>
<dbReference type="InterPro" id="IPR009061">
    <property type="entry name" value="DNA-bd_dom_put_sf"/>
</dbReference>
<dbReference type="InterPro" id="IPR053905">
    <property type="entry name" value="EF-G-like_DII"/>
</dbReference>
<dbReference type="InterPro" id="IPR013575">
    <property type="entry name" value="IF2_assoc_dom_bac"/>
</dbReference>
<dbReference type="InterPro" id="IPR044145">
    <property type="entry name" value="IF2_II"/>
</dbReference>
<dbReference type="InterPro" id="IPR006847">
    <property type="entry name" value="IF2_N"/>
</dbReference>
<dbReference type="InterPro" id="IPR027417">
    <property type="entry name" value="P-loop_NTPase"/>
</dbReference>
<dbReference type="InterPro" id="IPR005225">
    <property type="entry name" value="Small_GTP-bd"/>
</dbReference>
<dbReference type="InterPro" id="IPR000795">
    <property type="entry name" value="T_Tr_GTP-bd_dom"/>
</dbReference>
<dbReference type="InterPro" id="IPR000178">
    <property type="entry name" value="TF_IF2_bacterial-like"/>
</dbReference>
<dbReference type="InterPro" id="IPR015760">
    <property type="entry name" value="TIF_IF2"/>
</dbReference>
<dbReference type="InterPro" id="IPR023115">
    <property type="entry name" value="TIF_IF2_dom3"/>
</dbReference>
<dbReference type="InterPro" id="IPR036925">
    <property type="entry name" value="TIF_IF2_dom3_sf"/>
</dbReference>
<dbReference type="InterPro" id="IPR009000">
    <property type="entry name" value="Transl_B-barrel_sf"/>
</dbReference>
<dbReference type="NCBIfam" id="TIGR00487">
    <property type="entry name" value="IF-2"/>
    <property type="match status" value="1"/>
</dbReference>
<dbReference type="NCBIfam" id="TIGR00231">
    <property type="entry name" value="small_GTP"/>
    <property type="match status" value="1"/>
</dbReference>
<dbReference type="PANTHER" id="PTHR43381:SF5">
    <property type="entry name" value="TR-TYPE G DOMAIN-CONTAINING PROTEIN"/>
    <property type="match status" value="1"/>
</dbReference>
<dbReference type="PANTHER" id="PTHR43381">
    <property type="entry name" value="TRANSLATION INITIATION FACTOR IF-2-RELATED"/>
    <property type="match status" value="1"/>
</dbReference>
<dbReference type="Pfam" id="PF22042">
    <property type="entry name" value="EF-G_D2"/>
    <property type="match status" value="1"/>
</dbReference>
<dbReference type="Pfam" id="PF00009">
    <property type="entry name" value="GTP_EFTU"/>
    <property type="match status" value="1"/>
</dbReference>
<dbReference type="Pfam" id="PF11987">
    <property type="entry name" value="IF-2"/>
    <property type="match status" value="1"/>
</dbReference>
<dbReference type="Pfam" id="PF08364">
    <property type="entry name" value="IF2_assoc"/>
    <property type="match status" value="1"/>
</dbReference>
<dbReference type="Pfam" id="PF04760">
    <property type="entry name" value="IF2_N"/>
    <property type="match status" value="1"/>
</dbReference>
<dbReference type="SUPFAM" id="SSF52156">
    <property type="entry name" value="Initiation factor IF2/eIF5b, domain 3"/>
    <property type="match status" value="1"/>
</dbReference>
<dbReference type="SUPFAM" id="SSF52540">
    <property type="entry name" value="P-loop containing nucleoside triphosphate hydrolases"/>
    <property type="match status" value="1"/>
</dbReference>
<dbReference type="SUPFAM" id="SSF46955">
    <property type="entry name" value="Putative DNA-binding domain"/>
    <property type="match status" value="1"/>
</dbReference>
<dbReference type="SUPFAM" id="SSF50447">
    <property type="entry name" value="Translation proteins"/>
    <property type="match status" value="2"/>
</dbReference>
<dbReference type="PROSITE" id="PS51722">
    <property type="entry name" value="G_TR_2"/>
    <property type="match status" value="1"/>
</dbReference>
<dbReference type="PROSITE" id="PS01176">
    <property type="entry name" value="IF2"/>
    <property type="match status" value="1"/>
</dbReference>
<accession>Q4FVL5</accession>
<reference key="1">
    <citation type="journal article" date="2010" name="Appl. Environ. Microbiol.">
        <title>The genome sequence of Psychrobacter arcticus 273-4, a psychroactive Siberian permafrost bacterium, reveals mechanisms for adaptation to low-temperature growth.</title>
        <authorList>
            <person name="Ayala-del-Rio H.L."/>
            <person name="Chain P.S."/>
            <person name="Grzymski J.J."/>
            <person name="Ponder M.A."/>
            <person name="Ivanova N."/>
            <person name="Bergholz P.W."/>
            <person name="Di Bartolo G."/>
            <person name="Hauser L."/>
            <person name="Land M."/>
            <person name="Bakermans C."/>
            <person name="Rodrigues D."/>
            <person name="Klappenbach J."/>
            <person name="Zarka D."/>
            <person name="Larimer F."/>
            <person name="Richardson P."/>
            <person name="Murray A."/>
            <person name="Thomashow M."/>
            <person name="Tiedje J.M."/>
        </authorList>
    </citation>
    <scope>NUCLEOTIDE SEQUENCE [LARGE SCALE GENOMIC DNA]</scope>
    <source>
        <strain>DSM 17307 / VKM B-2377 / 273-4</strain>
    </source>
</reference>
<sequence>MADKTVKELADMVSKTASAVQQQLVDAGLPARAEGDLVTELEQEKLVTYLKQSHGQEEKRRISLKSKTTSTARVTGSSGKSKSVNVEVRKKKVFEKPDPEKMAEELAAREQAMIESQARAAKDAEDRAATKKKSEERQAATLAAMRASLGSSKKSDDKNDDISTSVVVKKGGKTTIEVKPKEQPKKKVAATKPKVETAVERKAREVREKEEARLREIETETRRTQAEEAQKRTLEQMRKMAGQYTDQPATEVRKDEPLAEGLVGDALEESFEKERREIKRGTSSTTARGRGRRKNQDEREIKNRKNGLRSSQSAQHKFEKPVEKIVYDVEISEQITVSDLAQRMAVKAREVTKLLMKMGEIARESDTIDQATASLIVEEMGHNPVPVSDTKVEDDLQDAADERSSNVQTRPPVVTIMGHVDHGKTSLLDKIRETKVATGEAGGITQHIGAYHVKTARGVITFLDTPGHAAFSAMRSRGAQATDIVVLVVAADDGMMPQTEEAIDHARAAGTPLIVAINKMDKPSADPDRVLNELTAKEVVSEEWGGDTPMARISAKTGDGIDELLELISLQAELMELEAPLDGPAQGVVIESRLEKGRGPVVSVLVKKGTLKQGDLVLAGEHYGKVRAMTDEHGQRIQSAGPSIPVEILGLPETPAAGSEFLVLTDEKKAREVADFRTNRERERQLERQNAMRLESMFDQMEQGNVSYLNIVLKTDVRGSLEALLSALNELSTDEVKVRVISSGVGPISESDVTLAESSEAVLLGFNVRADATARRKSDTANMDIRYYSVIYGLIDDVKAAMSGMLAPEHREKILGVADVREVFRSSKFGAAAGCMVVEGTIYRNKPIRVLRNDQVIFTGQLQSLRRYKEDVNEVRTGMECGLAVRGYDVEAGDKIEVFEIQEFARTI</sequence>
<keyword id="KW-0963">Cytoplasm</keyword>
<keyword id="KW-0342">GTP-binding</keyword>
<keyword id="KW-0396">Initiation factor</keyword>
<keyword id="KW-0547">Nucleotide-binding</keyword>
<keyword id="KW-0648">Protein biosynthesis</keyword>
<keyword id="KW-1185">Reference proteome</keyword>
<proteinExistence type="inferred from homology"/>
<gene>
    <name evidence="2" type="primary">infB</name>
    <name type="ordered locus">Psyc_0069</name>
</gene>